<comment type="function">
    <text evidence="1">Can catalyze the hydrolysis of ATP in the presence of single-stranded DNA, the ATP-dependent uptake of single-stranded DNA by duplex DNA, and the ATP-dependent hybridization of homologous single-stranded DNAs. It interacts with LexA causing its activation and leading to its autocatalytic cleavage.</text>
</comment>
<comment type="subcellular location">
    <subcellularLocation>
        <location evidence="1">Cytoplasm</location>
    </subcellularLocation>
</comment>
<comment type="similarity">
    <text evidence="1">Belongs to the RecA family.</text>
</comment>
<feature type="chain" id="PRO_0000122764" description="Protein RecA">
    <location>
        <begin position="1"/>
        <end position="329"/>
    </location>
</feature>
<feature type="binding site" evidence="1">
    <location>
        <begin position="63"/>
        <end position="70"/>
    </location>
    <ligand>
        <name>ATP</name>
        <dbReference type="ChEBI" id="CHEBI:30616"/>
    </ligand>
</feature>
<evidence type="ECO:0000255" key="1">
    <source>
        <dbReference type="HAMAP-Rule" id="MF_00268"/>
    </source>
</evidence>
<proteinExistence type="inferred from homology"/>
<sequence length="329" mass="36754">MNSMTEQKALELAIKEIEKKFGKETFSQSESFDNQVIKSGSILLDNAIGVGGYPKGKIIEIYGNESSGKTTIALQCVKECIKEGGSVAYIDAECSIDSKYLSHLGIDPTKLLVATPEYGEQAFSIIDALIKTNMVDLIVVDSVAALVPKNDIESSMEDQSMGTHARMMSKGLKILQTSLSKHKTTVIFINQVREKIGVMFGNNEITTGGRALKFFSTLRLDVRRSELIKSGTDVIGIRSKITVTKNKVAPPFKNCFVDIFFNKGFDPTKEIIDFAIEYEIIKKSGSWFYYNETKLAQGRNNLDSYLKENNEIYDEIKKLVFDEIDKNNK</sequence>
<accession>Q8EVC7</accession>
<gene>
    <name evidence="1" type="primary">recA</name>
    <name type="ordered locus">MYPE6390</name>
</gene>
<keyword id="KW-0067">ATP-binding</keyword>
<keyword id="KW-0963">Cytoplasm</keyword>
<keyword id="KW-0227">DNA damage</keyword>
<keyword id="KW-0233">DNA recombination</keyword>
<keyword id="KW-0234">DNA repair</keyword>
<keyword id="KW-0238">DNA-binding</keyword>
<keyword id="KW-0547">Nucleotide-binding</keyword>
<keyword id="KW-1185">Reference proteome</keyword>
<keyword id="KW-0742">SOS response</keyword>
<dbReference type="EMBL" id="BA000026">
    <property type="protein sequence ID" value="BAC44429.1"/>
    <property type="molecule type" value="Genomic_DNA"/>
</dbReference>
<dbReference type="RefSeq" id="WP_011077459.1">
    <property type="nucleotide sequence ID" value="NC_004432.1"/>
</dbReference>
<dbReference type="SMR" id="Q8EVC7"/>
<dbReference type="FunCoup" id="Q8EVC7">
    <property type="interactions" value="218"/>
</dbReference>
<dbReference type="STRING" id="272633.gene:10731758"/>
<dbReference type="KEGG" id="mpe:MYPE6390"/>
<dbReference type="eggNOG" id="COG0468">
    <property type="taxonomic scope" value="Bacteria"/>
</dbReference>
<dbReference type="HOGENOM" id="CLU_040469_1_2_14"/>
<dbReference type="InParanoid" id="Q8EVC7"/>
<dbReference type="Proteomes" id="UP000002522">
    <property type="component" value="Chromosome"/>
</dbReference>
<dbReference type="GO" id="GO:0005829">
    <property type="term" value="C:cytosol"/>
    <property type="evidence" value="ECO:0007669"/>
    <property type="project" value="TreeGrafter"/>
</dbReference>
<dbReference type="GO" id="GO:0005524">
    <property type="term" value="F:ATP binding"/>
    <property type="evidence" value="ECO:0007669"/>
    <property type="project" value="UniProtKB-UniRule"/>
</dbReference>
<dbReference type="GO" id="GO:0016887">
    <property type="term" value="F:ATP hydrolysis activity"/>
    <property type="evidence" value="ECO:0007669"/>
    <property type="project" value="InterPro"/>
</dbReference>
<dbReference type="GO" id="GO:0140664">
    <property type="term" value="F:ATP-dependent DNA damage sensor activity"/>
    <property type="evidence" value="ECO:0007669"/>
    <property type="project" value="InterPro"/>
</dbReference>
<dbReference type="GO" id="GO:0003684">
    <property type="term" value="F:damaged DNA binding"/>
    <property type="evidence" value="ECO:0007669"/>
    <property type="project" value="UniProtKB-UniRule"/>
</dbReference>
<dbReference type="GO" id="GO:0003697">
    <property type="term" value="F:single-stranded DNA binding"/>
    <property type="evidence" value="ECO:0007669"/>
    <property type="project" value="UniProtKB-UniRule"/>
</dbReference>
<dbReference type="GO" id="GO:0006310">
    <property type="term" value="P:DNA recombination"/>
    <property type="evidence" value="ECO:0007669"/>
    <property type="project" value="UniProtKB-UniRule"/>
</dbReference>
<dbReference type="GO" id="GO:0006281">
    <property type="term" value="P:DNA repair"/>
    <property type="evidence" value="ECO:0007669"/>
    <property type="project" value="UniProtKB-UniRule"/>
</dbReference>
<dbReference type="GO" id="GO:0009432">
    <property type="term" value="P:SOS response"/>
    <property type="evidence" value="ECO:0007669"/>
    <property type="project" value="UniProtKB-UniRule"/>
</dbReference>
<dbReference type="CDD" id="cd00983">
    <property type="entry name" value="RecA"/>
    <property type="match status" value="1"/>
</dbReference>
<dbReference type="FunFam" id="3.40.50.300:FF:000087">
    <property type="entry name" value="Recombinase RecA"/>
    <property type="match status" value="1"/>
</dbReference>
<dbReference type="Gene3D" id="3.40.50.300">
    <property type="entry name" value="P-loop containing nucleotide triphosphate hydrolases"/>
    <property type="match status" value="1"/>
</dbReference>
<dbReference type="HAMAP" id="MF_00268">
    <property type="entry name" value="RecA"/>
    <property type="match status" value="1"/>
</dbReference>
<dbReference type="InterPro" id="IPR003593">
    <property type="entry name" value="AAA+_ATPase"/>
</dbReference>
<dbReference type="InterPro" id="IPR013765">
    <property type="entry name" value="DNA_recomb/repair_RecA"/>
</dbReference>
<dbReference type="InterPro" id="IPR020584">
    <property type="entry name" value="DNA_recomb/repair_RecA_CS"/>
</dbReference>
<dbReference type="InterPro" id="IPR027417">
    <property type="entry name" value="P-loop_NTPase"/>
</dbReference>
<dbReference type="InterPro" id="IPR049261">
    <property type="entry name" value="RecA-like_C"/>
</dbReference>
<dbReference type="InterPro" id="IPR049428">
    <property type="entry name" value="RecA-like_N"/>
</dbReference>
<dbReference type="InterPro" id="IPR020588">
    <property type="entry name" value="RecA_ATP-bd"/>
</dbReference>
<dbReference type="InterPro" id="IPR023400">
    <property type="entry name" value="RecA_C_sf"/>
</dbReference>
<dbReference type="InterPro" id="IPR020587">
    <property type="entry name" value="RecA_monomer-monomer_interface"/>
</dbReference>
<dbReference type="NCBIfam" id="TIGR02012">
    <property type="entry name" value="tigrfam_recA"/>
    <property type="match status" value="1"/>
</dbReference>
<dbReference type="PANTHER" id="PTHR45900:SF1">
    <property type="entry name" value="MITOCHONDRIAL DNA REPAIR PROTEIN RECA HOMOLOG-RELATED"/>
    <property type="match status" value="1"/>
</dbReference>
<dbReference type="PANTHER" id="PTHR45900">
    <property type="entry name" value="RECA"/>
    <property type="match status" value="1"/>
</dbReference>
<dbReference type="Pfam" id="PF00154">
    <property type="entry name" value="RecA"/>
    <property type="match status" value="1"/>
</dbReference>
<dbReference type="Pfam" id="PF21096">
    <property type="entry name" value="RecA_C"/>
    <property type="match status" value="1"/>
</dbReference>
<dbReference type="PRINTS" id="PR00142">
    <property type="entry name" value="RECA"/>
</dbReference>
<dbReference type="SMART" id="SM00382">
    <property type="entry name" value="AAA"/>
    <property type="match status" value="1"/>
</dbReference>
<dbReference type="SUPFAM" id="SSF52540">
    <property type="entry name" value="P-loop containing nucleoside triphosphate hydrolases"/>
    <property type="match status" value="1"/>
</dbReference>
<dbReference type="SUPFAM" id="SSF54752">
    <property type="entry name" value="RecA protein, C-terminal domain"/>
    <property type="match status" value="1"/>
</dbReference>
<dbReference type="PROSITE" id="PS00321">
    <property type="entry name" value="RECA_1"/>
    <property type="match status" value="1"/>
</dbReference>
<dbReference type="PROSITE" id="PS50162">
    <property type="entry name" value="RECA_2"/>
    <property type="match status" value="1"/>
</dbReference>
<dbReference type="PROSITE" id="PS50163">
    <property type="entry name" value="RECA_3"/>
    <property type="match status" value="1"/>
</dbReference>
<protein>
    <recommendedName>
        <fullName evidence="1">Protein RecA</fullName>
    </recommendedName>
    <alternativeName>
        <fullName evidence="1">Recombinase A</fullName>
    </alternativeName>
</protein>
<name>RECA_MALP2</name>
<organism>
    <name type="scientific">Malacoplasma penetrans (strain HF-2)</name>
    <name type="common">Mycoplasma penetrans</name>
    <dbReference type="NCBI Taxonomy" id="272633"/>
    <lineage>
        <taxon>Bacteria</taxon>
        <taxon>Bacillati</taxon>
        <taxon>Mycoplasmatota</taxon>
        <taxon>Mycoplasmoidales</taxon>
        <taxon>Mycoplasmoidaceae</taxon>
        <taxon>Malacoplasma</taxon>
    </lineage>
</organism>
<reference key="1">
    <citation type="journal article" date="2002" name="Nucleic Acids Res.">
        <title>The complete genomic sequence of Mycoplasma penetrans, an intracellular bacterial pathogen in humans.</title>
        <authorList>
            <person name="Sasaki Y."/>
            <person name="Ishikawa J."/>
            <person name="Yamashita A."/>
            <person name="Oshima K."/>
            <person name="Kenri T."/>
            <person name="Furuya K."/>
            <person name="Yoshino C."/>
            <person name="Horino A."/>
            <person name="Shiba T."/>
            <person name="Sasaki T."/>
            <person name="Hattori M."/>
        </authorList>
    </citation>
    <scope>NUCLEOTIDE SEQUENCE [LARGE SCALE GENOMIC DNA]</scope>
    <source>
        <strain>HF-2</strain>
    </source>
</reference>